<comment type="function">
    <text evidence="1">Involved in peptide bond synthesis. Stimulates efficient translation and peptide-bond synthesis on native or reconstituted 70S ribosomes in vitro. Probably functions indirectly by altering the affinity of the ribosome for aminoacyl-tRNA, thus increasing their reactivity as acceptors for peptidyl transferase.</text>
</comment>
<comment type="pathway">
    <text evidence="1">Protein biosynthesis; polypeptide chain elongation.</text>
</comment>
<comment type="subcellular location">
    <subcellularLocation>
        <location evidence="1">Cytoplasm</location>
    </subcellularLocation>
</comment>
<comment type="similarity">
    <text evidence="1">Belongs to the elongation factor P family.</text>
</comment>
<name>EFP_ENDTX</name>
<sequence length="185" mass="21033">MISTSDFKNGTNILVDGEPYQIAWFQNHKPGKGGAVMRVKLRHLKKGGIIERTFKSGEKFKALTITRQKKRFLYKESNNFNFMDMDTYEQITVHPELLGKMVNFLKENLEVEAIYLENELIGIDLPVIIEMTIAEAEHGIKGDSVSNTTKTAKLETGADIHVPLFIKEGDRIKVDTRTGEYVERA</sequence>
<feature type="chain" id="PRO_1000096221" description="Elongation factor P">
    <location>
        <begin position="1"/>
        <end position="185"/>
    </location>
</feature>
<gene>
    <name evidence="1" type="primary">efp</name>
    <name type="ordered locus">TGRD_189</name>
</gene>
<organism>
    <name type="scientific">Endomicrobium trichonymphae</name>
    <dbReference type="NCBI Taxonomy" id="1408204"/>
    <lineage>
        <taxon>Bacteria</taxon>
        <taxon>Pseudomonadati</taxon>
        <taxon>Elusimicrobiota</taxon>
        <taxon>Endomicrobiia</taxon>
        <taxon>Endomicrobiales</taxon>
        <taxon>Endomicrobiaceae</taxon>
        <taxon>Candidatus Endomicrobiellum</taxon>
    </lineage>
</organism>
<protein>
    <recommendedName>
        <fullName evidence="1">Elongation factor P</fullName>
        <shortName evidence="1">EF-P</shortName>
    </recommendedName>
</protein>
<evidence type="ECO:0000255" key="1">
    <source>
        <dbReference type="HAMAP-Rule" id="MF_00141"/>
    </source>
</evidence>
<keyword id="KW-0963">Cytoplasm</keyword>
<keyword id="KW-0251">Elongation factor</keyword>
<keyword id="KW-0648">Protein biosynthesis</keyword>
<reference key="1">
    <citation type="journal article" date="2008" name="Proc. Natl. Acad. Sci. U.S.A.">
        <title>Complete genome of the uncultured termite group 1 bacteria in a single host protist cell.</title>
        <authorList>
            <person name="Hongoh Y."/>
            <person name="Sharma V.K."/>
            <person name="Prakash T."/>
            <person name="Noda S."/>
            <person name="Taylor T.D."/>
            <person name="Kudo T."/>
            <person name="Sakaki Y."/>
            <person name="Toyoda A."/>
            <person name="Hattori M."/>
            <person name="Ohkuma M."/>
        </authorList>
    </citation>
    <scope>NUCLEOTIDE SEQUENCE [LARGE SCALE GENOMIC DNA]</scope>
</reference>
<dbReference type="EMBL" id="AP009510">
    <property type="protein sequence ID" value="BAG13672.1"/>
    <property type="molecule type" value="Genomic_DNA"/>
</dbReference>
<dbReference type="RefSeq" id="WP_015423200.1">
    <property type="nucleotide sequence ID" value="NC_020419.1"/>
</dbReference>
<dbReference type="SMR" id="B1GZJ0"/>
<dbReference type="STRING" id="471821.TGRD_189"/>
<dbReference type="KEGG" id="rsd:TGRD_189"/>
<dbReference type="PATRIC" id="fig|471821.5.peg.289"/>
<dbReference type="HOGENOM" id="CLU_074944_0_1_0"/>
<dbReference type="UniPathway" id="UPA00345"/>
<dbReference type="Proteomes" id="UP000001691">
    <property type="component" value="Chromosome"/>
</dbReference>
<dbReference type="GO" id="GO:0005737">
    <property type="term" value="C:cytoplasm"/>
    <property type="evidence" value="ECO:0007669"/>
    <property type="project" value="UniProtKB-SubCell"/>
</dbReference>
<dbReference type="GO" id="GO:0003746">
    <property type="term" value="F:translation elongation factor activity"/>
    <property type="evidence" value="ECO:0007669"/>
    <property type="project" value="UniProtKB-UniRule"/>
</dbReference>
<dbReference type="GO" id="GO:0043043">
    <property type="term" value="P:peptide biosynthetic process"/>
    <property type="evidence" value="ECO:0007669"/>
    <property type="project" value="InterPro"/>
</dbReference>
<dbReference type="CDD" id="cd04470">
    <property type="entry name" value="S1_EF-P_repeat_1"/>
    <property type="match status" value="1"/>
</dbReference>
<dbReference type="CDD" id="cd05794">
    <property type="entry name" value="S1_EF-P_repeat_2"/>
    <property type="match status" value="1"/>
</dbReference>
<dbReference type="FunFam" id="2.30.30.30:FF:000003">
    <property type="entry name" value="Elongation factor P"/>
    <property type="match status" value="1"/>
</dbReference>
<dbReference type="FunFam" id="2.40.50.140:FF:000004">
    <property type="entry name" value="Elongation factor P"/>
    <property type="match status" value="1"/>
</dbReference>
<dbReference type="Gene3D" id="2.30.30.30">
    <property type="match status" value="1"/>
</dbReference>
<dbReference type="Gene3D" id="2.40.50.140">
    <property type="entry name" value="Nucleic acid-binding proteins"/>
    <property type="match status" value="2"/>
</dbReference>
<dbReference type="HAMAP" id="MF_00141">
    <property type="entry name" value="EF_P"/>
    <property type="match status" value="1"/>
</dbReference>
<dbReference type="InterPro" id="IPR015365">
    <property type="entry name" value="Elong-fact-P_C"/>
</dbReference>
<dbReference type="InterPro" id="IPR012340">
    <property type="entry name" value="NA-bd_OB-fold"/>
</dbReference>
<dbReference type="InterPro" id="IPR014722">
    <property type="entry name" value="Rib_uL2_dom2"/>
</dbReference>
<dbReference type="InterPro" id="IPR020599">
    <property type="entry name" value="Transl_elong_fac_P/YeiP"/>
</dbReference>
<dbReference type="InterPro" id="IPR013185">
    <property type="entry name" value="Transl_elong_KOW-like"/>
</dbReference>
<dbReference type="InterPro" id="IPR001059">
    <property type="entry name" value="Transl_elong_P/YeiP_cen"/>
</dbReference>
<dbReference type="InterPro" id="IPR013852">
    <property type="entry name" value="Transl_elong_P/YeiP_CS"/>
</dbReference>
<dbReference type="InterPro" id="IPR011768">
    <property type="entry name" value="Transl_elongation_fac_P"/>
</dbReference>
<dbReference type="InterPro" id="IPR008991">
    <property type="entry name" value="Translation_prot_SH3-like_sf"/>
</dbReference>
<dbReference type="NCBIfam" id="TIGR00038">
    <property type="entry name" value="efp"/>
    <property type="match status" value="1"/>
</dbReference>
<dbReference type="NCBIfam" id="NF001810">
    <property type="entry name" value="PRK00529.1"/>
    <property type="match status" value="1"/>
</dbReference>
<dbReference type="PANTHER" id="PTHR30053">
    <property type="entry name" value="ELONGATION FACTOR P"/>
    <property type="match status" value="1"/>
</dbReference>
<dbReference type="PANTHER" id="PTHR30053:SF12">
    <property type="entry name" value="ELONGATION FACTOR P (EF-P) FAMILY PROTEIN"/>
    <property type="match status" value="1"/>
</dbReference>
<dbReference type="Pfam" id="PF01132">
    <property type="entry name" value="EFP"/>
    <property type="match status" value="1"/>
</dbReference>
<dbReference type="Pfam" id="PF08207">
    <property type="entry name" value="EFP_N"/>
    <property type="match status" value="1"/>
</dbReference>
<dbReference type="Pfam" id="PF09285">
    <property type="entry name" value="Elong-fact-P_C"/>
    <property type="match status" value="1"/>
</dbReference>
<dbReference type="PIRSF" id="PIRSF005901">
    <property type="entry name" value="EF-P"/>
    <property type="match status" value="1"/>
</dbReference>
<dbReference type="SMART" id="SM01185">
    <property type="entry name" value="EFP"/>
    <property type="match status" value="1"/>
</dbReference>
<dbReference type="SMART" id="SM00841">
    <property type="entry name" value="Elong-fact-P_C"/>
    <property type="match status" value="1"/>
</dbReference>
<dbReference type="SUPFAM" id="SSF50249">
    <property type="entry name" value="Nucleic acid-binding proteins"/>
    <property type="match status" value="2"/>
</dbReference>
<dbReference type="SUPFAM" id="SSF50104">
    <property type="entry name" value="Translation proteins SH3-like domain"/>
    <property type="match status" value="1"/>
</dbReference>
<dbReference type="PROSITE" id="PS01275">
    <property type="entry name" value="EFP"/>
    <property type="match status" value="1"/>
</dbReference>
<accession>B1GZJ0</accession>
<proteinExistence type="inferred from homology"/>